<evidence type="ECO:0000255" key="1">
    <source>
        <dbReference type="HAMAP-Rule" id="MF_00524"/>
    </source>
</evidence>
<dbReference type="EC" id="2.7.1.2" evidence="1"/>
<dbReference type="EMBL" id="FM209186">
    <property type="protein sequence ID" value="CAW26603.1"/>
    <property type="molecule type" value="Genomic_DNA"/>
</dbReference>
<dbReference type="RefSeq" id="WP_003114838.1">
    <property type="nucleotide sequence ID" value="NC_011770.1"/>
</dbReference>
<dbReference type="SMR" id="B7V9H3"/>
<dbReference type="KEGG" id="pag:PLES_18751"/>
<dbReference type="HOGENOM" id="CLU_042582_1_0_6"/>
<dbReference type="GO" id="GO:0005829">
    <property type="term" value="C:cytosol"/>
    <property type="evidence" value="ECO:0007669"/>
    <property type="project" value="TreeGrafter"/>
</dbReference>
<dbReference type="GO" id="GO:0005524">
    <property type="term" value="F:ATP binding"/>
    <property type="evidence" value="ECO:0007669"/>
    <property type="project" value="UniProtKB-UniRule"/>
</dbReference>
<dbReference type="GO" id="GO:0005536">
    <property type="term" value="F:D-glucose binding"/>
    <property type="evidence" value="ECO:0007669"/>
    <property type="project" value="InterPro"/>
</dbReference>
<dbReference type="GO" id="GO:0004340">
    <property type="term" value="F:glucokinase activity"/>
    <property type="evidence" value="ECO:0007669"/>
    <property type="project" value="UniProtKB-UniRule"/>
</dbReference>
<dbReference type="GO" id="GO:0006096">
    <property type="term" value="P:glycolytic process"/>
    <property type="evidence" value="ECO:0007669"/>
    <property type="project" value="UniProtKB-UniRule"/>
</dbReference>
<dbReference type="CDD" id="cd24008">
    <property type="entry name" value="ASKHA_NBD_GLK"/>
    <property type="match status" value="1"/>
</dbReference>
<dbReference type="FunFam" id="3.40.367.20:FF:000013">
    <property type="entry name" value="Glucokinase"/>
    <property type="match status" value="1"/>
</dbReference>
<dbReference type="Gene3D" id="3.30.420.40">
    <property type="match status" value="1"/>
</dbReference>
<dbReference type="Gene3D" id="3.40.367.20">
    <property type="match status" value="1"/>
</dbReference>
<dbReference type="HAMAP" id="MF_00524">
    <property type="entry name" value="Glucokinase"/>
    <property type="match status" value="1"/>
</dbReference>
<dbReference type="InterPro" id="IPR043129">
    <property type="entry name" value="ATPase_NBD"/>
</dbReference>
<dbReference type="InterPro" id="IPR050201">
    <property type="entry name" value="Bacterial_glucokinase"/>
</dbReference>
<dbReference type="InterPro" id="IPR003836">
    <property type="entry name" value="Glucokinase"/>
</dbReference>
<dbReference type="NCBIfam" id="TIGR00749">
    <property type="entry name" value="glk"/>
    <property type="match status" value="1"/>
</dbReference>
<dbReference type="NCBIfam" id="NF001415">
    <property type="entry name" value="PRK00292.1-2"/>
    <property type="match status" value="1"/>
</dbReference>
<dbReference type="PANTHER" id="PTHR47690">
    <property type="entry name" value="GLUCOKINASE"/>
    <property type="match status" value="1"/>
</dbReference>
<dbReference type="PANTHER" id="PTHR47690:SF1">
    <property type="entry name" value="GLUCOKINASE"/>
    <property type="match status" value="1"/>
</dbReference>
<dbReference type="Pfam" id="PF02685">
    <property type="entry name" value="Glucokinase"/>
    <property type="match status" value="1"/>
</dbReference>
<dbReference type="SUPFAM" id="SSF53067">
    <property type="entry name" value="Actin-like ATPase domain"/>
    <property type="match status" value="1"/>
</dbReference>
<keyword id="KW-0067">ATP-binding</keyword>
<keyword id="KW-0963">Cytoplasm</keyword>
<keyword id="KW-0324">Glycolysis</keyword>
<keyword id="KW-0418">Kinase</keyword>
<keyword id="KW-0547">Nucleotide-binding</keyword>
<keyword id="KW-0808">Transferase</keyword>
<reference key="1">
    <citation type="journal article" date="2009" name="Genome Res.">
        <title>Newly introduced genomic prophage islands are critical determinants of in vivo competitiveness in the Liverpool epidemic strain of Pseudomonas aeruginosa.</title>
        <authorList>
            <person name="Winstanley C."/>
            <person name="Langille M.G.I."/>
            <person name="Fothergill J.L."/>
            <person name="Kukavica-Ibrulj I."/>
            <person name="Paradis-Bleau C."/>
            <person name="Sanschagrin F."/>
            <person name="Thomson N.R."/>
            <person name="Winsor G.L."/>
            <person name="Quail M.A."/>
            <person name="Lennard N."/>
            <person name="Bignell A."/>
            <person name="Clarke L."/>
            <person name="Seeger K."/>
            <person name="Saunders D."/>
            <person name="Harris D."/>
            <person name="Parkhill J."/>
            <person name="Hancock R.E.W."/>
            <person name="Brinkman F.S.L."/>
            <person name="Levesque R.C."/>
        </authorList>
    </citation>
    <scope>NUCLEOTIDE SEQUENCE [LARGE SCALE GENOMIC DNA]</scope>
    <source>
        <strain>LESB58</strain>
    </source>
</reference>
<organism>
    <name type="scientific">Pseudomonas aeruginosa (strain LESB58)</name>
    <dbReference type="NCBI Taxonomy" id="557722"/>
    <lineage>
        <taxon>Bacteria</taxon>
        <taxon>Pseudomonadati</taxon>
        <taxon>Pseudomonadota</taxon>
        <taxon>Gammaproteobacteria</taxon>
        <taxon>Pseudomonadales</taxon>
        <taxon>Pseudomonadaceae</taxon>
        <taxon>Pseudomonas</taxon>
    </lineage>
</organism>
<feature type="chain" id="PRO_1000127714" description="Glucokinase">
    <location>
        <begin position="1"/>
        <end position="331"/>
    </location>
</feature>
<feature type="binding site" evidence="1">
    <location>
        <begin position="16"/>
        <end position="21"/>
    </location>
    <ligand>
        <name>ATP</name>
        <dbReference type="ChEBI" id="CHEBI:30616"/>
    </ligand>
</feature>
<protein>
    <recommendedName>
        <fullName evidence="1">Glucokinase</fullName>
        <ecNumber evidence="1">2.7.1.2</ecNumber>
    </recommendedName>
    <alternativeName>
        <fullName evidence="1">Glucose kinase</fullName>
    </alternativeName>
</protein>
<name>GLK_PSEA8</name>
<comment type="catalytic activity">
    <reaction evidence="1">
        <text>D-glucose + ATP = D-glucose 6-phosphate + ADP + H(+)</text>
        <dbReference type="Rhea" id="RHEA:17825"/>
        <dbReference type="ChEBI" id="CHEBI:4167"/>
        <dbReference type="ChEBI" id="CHEBI:15378"/>
        <dbReference type="ChEBI" id="CHEBI:30616"/>
        <dbReference type="ChEBI" id="CHEBI:61548"/>
        <dbReference type="ChEBI" id="CHEBI:456216"/>
        <dbReference type="EC" id="2.7.1.2"/>
    </reaction>
</comment>
<comment type="subcellular location">
    <subcellularLocation>
        <location evidence="1">Cytoplasm</location>
    </subcellularLocation>
</comment>
<comment type="similarity">
    <text evidence="1">Belongs to the bacterial glucokinase family.</text>
</comment>
<gene>
    <name evidence="1" type="primary">glk</name>
    <name type="ordered locus">PLES_18751</name>
</gene>
<accession>B7V9H3</accession>
<proteinExistence type="inferred from homology"/>
<sequence>MNNDNKRSAGGLGLVGDIGGTNARFALWRGQRLESIEVLACADYPRPELAVRDYLARIGESVANIDSVCLACAGPVGAADFRFTNNHWVINRAAFREELGLDHLLLVNDFSTMAWAASRLGADELVQVRAGSAQADRARLIIGPGTGLGVGSLLPLGGGRWEVLPCEGGHVDLPVTSPRDFALWQGLQARYGHVSAERALSGNGLLALYEISCALDGVAVRASSAAEVGALAMAGDAQADAVLEHFFLWLARVAGNAVLTVGALGGVYITGGIVPRFLERFIASGFAEAFASRGKTSGAYLQDVPVWVMTAEHPGLLGAGVALQQALDAEG</sequence>